<evidence type="ECO:0000255" key="1"/>
<evidence type="ECO:0000255" key="2">
    <source>
        <dbReference type="PROSITE-ProRule" id="PRU00498"/>
    </source>
</evidence>
<evidence type="ECO:0000269" key="3">
    <source>
    </source>
</evidence>
<evidence type="ECO:0000303" key="4">
    <source>
    </source>
</evidence>
<evidence type="ECO:0000305" key="5"/>
<evidence type="ECO:0000305" key="6">
    <source>
    </source>
</evidence>
<evidence type="ECO:0000312" key="7">
    <source>
        <dbReference type="EMBL" id="AET03338.1"/>
    </source>
</evidence>
<evidence type="ECO:0000312" key="8">
    <source>
        <dbReference type="EMBL" id="RHN41527.1"/>
    </source>
</evidence>
<name>LEC11_MEDTR</name>
<gene>
    <name evidence="4" type="primary">LEC11</name>
    <name evidence="7" type="ordered locus">MTR_8g067940</name>
    <name evidence="8" type="ORF">MtrunA17_Chr8g0367011</name>
</gene>
<sequence length="295" mass="32737">MHYSHFYFIINNTNMTINAIPKLFATKNSISLSIVIFMYLLILVANVKSDSSFNFPNFQPEALKKLGFANDATLKNGVIQLTKKDAYGDPLKHSAGQFGLLKPIRLFDQTTGKVASFVTEFTFSVNSNGRQDHGDGFAFFMASPKFKIPNKNKSEGGFLGMFTRETALYTKEIVLVEFDSFANEWDPNPSSNLGIGSHLGIDVNSIKSVANALWLNDFDDITVGKARIEYDSSDKNLKVLVTYSEKGAFNGDSSLVYNIDLTTFLPEMIEIGFSASTGDLVETHDILSWSFTSNM</sequence>
<accession>A0A396GS61</accession>
<accession>Q2PP73</accession>
<organism>
    <name type="scientific">Medicago truncatula</name>
    <name type="common">Barrel medic</name>
    <name type="synonym">Medicago tribuloides</name>
    <dbReference type="NCBI Taxonomy" id="3880"/>
    <lineage>
        <taxon>Eukaryota</taxon>
        <taxon>Viridiplantae</taxon>
        <taxon>Streptophyta</taxon>
        <taxon>Embryophyta</taxon>
        <taxon>Tracheophyta</taxon>
        <taxon>Spermatophyta</taxon>
        <taxon>Magnoliopsida</taxon>
        <taxon>eudicotyledons</taxon>
        <taxon>Gunneridae</taxon>
        <taxon>Pentapetalae</taxon>
        <taxon>rosids</taxon>
        <taxon>fabids</taxon>
        <taxon>Fabales</taxon>
        <taxon>Fabaceae</taxon>
        <taxon>Papilionoideae</taxon>
        <taxon>50 kb inversion clade</taxon>
        <taxon>NPAAA clade</taxon>
        <taxon>Hologalegina</taxon>
        <taxon>IRL clade</taxon>
        <taxon>Trifolieae</taxon>
        <taxon>Medicago</taxon>
    </lineage>
</organism>
<reference key="1">
    <citation type="journal article" date="2011" name="Nature">
        <title>The Medicago genome provides insight into the evolution of rhizobial symbioses.</title>
        <authorList>
            <person name="Young N.D."/>
            <person name="Debelle F."/>
            <person name="Oldroyd G.E.D."/>
            <person name="Geurts R."/>
            <person name="Cannon S.B."/>
            <person name="Udvardi M.K."/>
            <person name="Benedito V.A."/>
            <person name="Mayer K.F.X."/>
            <person name="Gouzy J."/>
            <person name="Schoof H."/>
            <person name="Van de Peer Y."/>
            <person name="Proost S."/>
            <person name="Cook D.R."/>
            <person name="Meyers B.C."/>
            <person name="Spannagl M."/>
            <person name="Cheung F."/>
            <person name="De Mita S."/>
            <person name="Krishnakumar V."/>
            <person name="Gundlach H."/>
            <person name="Zhou S."/>
            <person name="Mudge J."/>
            <person name="Bharti A.K."/>
            <person name="Murray J.D."/>
            <person name="Naoumkina M.A."/>
            <person name="Rosen B."/>
            <person name="Silverstein K.A.T."/>
            <person name="Tang H."/>
            <person name="Rombauts S."/>
            <person name="Zhao P.X."/>
            <person name="Zhou P."/>
            <person name="Barbe V."/>
            <person name="Bardou P."/>
            <person name="Bechner M."/>
            <person name="Bellec A."/>
            <person name="Berger A."/>
            <person name="Berges H."/>
            <person name="Bidwell S."/>
            <person name="Bisseling T."/>
            <person name="Choisne N."/>
            <person name="Couloux A."/>
            <person name="Denny R."/>
            <person name="Deshpande S."/>
            <person name="Dai X."/>
            <person name="Doyle J.J."/>
            <person name="Dudez A.-M."/>
            <person name="Farmer A.D."/>
            <person name="Fouteau S."/>
            <person name="Franken C."/>
            <person name="Gibelin C."/>
            <person name="Gish J."/>
            <person name="Goldstein S."/>
            <person name="Gonzalez A.J."/>
            <person name="Green P.J."/>
            <person name="Hallab A."/>
            <person name="Hartog M."/>
            <person name="Hua A."/>
            <person name="Humphray S.J."/>
            <person name="Jeong D.-H."/>
            <person name="Jing Y."/>
            <person name="Jocker A."/>
            <person name="Kenton S.M."/>
            <person name="Kim D.-J."/>
            <person name="Klee K."/>
            <person name="Lai H."/>
            <person name="Lang C."/>
            <person name="Lin S."/>
            <person name="Macmil S.L."/>
            <person name="Magdelenat G."/>
            <person name="Matthews L."/>
            <person name="McCorrison J."/>
            <person name="Monaghan E.L."/>
            <person name="Mun J.-H."/>
            <person name="Najar F.Z."/>
            <person name="Nicholson C."/>
            <person name="Noirot C."/>
            <person name="O'Bleness M."/>
            <person name="Paule C.R."/>
            <person name="Poulain J."/>
            <person name="Prion F."/>
            <person name="Qin B."/>
            <person name="Qu C."/>
            <person name="Retzel E.F."/>
            <person name="Riddle C."/>
            <person name="Sallet E."/>
            <person name="Samain S."/>
            <person name="Samson N."/>
            <person name="Sanders I."/>
            <person name="Saurat O."/>
            <person name="Scarpelli C."/>
            <person name="Schiex T."/>
            <person name="Segurens B."/>
            <person name="Severin A.J."/>
            <person name="Sherrier D.J."/>
            <person name="Shi R."/>
            <person name="Sims S."/>
            <person name="Singer S.R."/>
            <person name="Sinharoy S."/>
            <person name="Sterck L."/>
            <person name="Viollet A."/>
            <person name="Wang B.-B."/>
            <person name="Wang K."/>
            <person name="Wang M."/>
            <person name="Wang X."/>
            <person name="Warfsmann J."/>
            <person name="Weissenbach J."/>
            <person name="White D.D."/>
            <person name="White J.D."/>
            <person name="Wiley G.B."/>
            <person name="Wincker P."/>
            <person name="Xing Y."/>
            <person name="Yang L."/>
            <person name="Yao Z."/>
            <person name="Ying F."/>
            <person name="Zhai J."/>
            <person name="Zhou L."/>
            <person name="Zuber A."/>
            <person name="Denarie J."/>
            <person name="Dixon R.A."/>
            <person name="May G.D."/>
            <person name="Schwartz D.C."/>
            <person name="Rogers J."/>
            <person name="Quetier F."/>
            <person name="Town C.D."/>
            <person name="Roe B.A."/>
        </authorList>
    </citation>
    <scope>NUCLEOTIDE SEQUENCE [LARGE SCALE GENOMIC DNA]</scope>
    <source>
        <strain>cv. Jemalong A17</strain>
    </source>
</reference>
<reference key="2">
    <citation type="journal article" date="2014" name="BMC Genomics">
        <title>An improved genome release (version Mt4.0) for the model legume Medicago truncatula.</title>
        <authorList>
            <person name="Tang H."/>
            <person name="Krishnakumar V."/>
            <person name="Bidwell S."/>
            <person name="Rosen B."/>
            <person name="Chan A."/>
            <person name="Zhou S."/>
            <person name="Gentzbittel L."/>
            <person name="Childs K.L."/>
            <person name="Yandell M."/>
            <person name="Gundlach H."/>
            <person name="Mayer K.F."/>
            <person name="Schwartz D.C."/>
            <person name="Town C.D."/>
        </authorList>
    </citation>
    <scope>GENOME REANNOTATION</scope>
    <source>
        <strain>cv. Jemalong A17</strain>
    </source>
</reference>
<reference key="3">
    <citation type="journal article" date="2018" name="Nat. Plants">
        <title>Whole-genome landscape of Medicago truncatula symbiotic genes.</title>
        <authorList>
            <person name="Pecrix Y."/>
            <person name="Staton S.E."/>
            <person name="Sallet E."/>
            <person name="Lelandais-Briere C."/>
            <person name="Moreau S."/>
            <person name="Carrere S."/>
            <person name="Blein T."/>
            <person name="Jardinaud M.F."/>
            <person name="Latrasse D."/>
            <person name="Zouine M."/>
            <person name="Zahm M."/>
            <person name="Kreplak J."/>
            <person name="Mayjonade B."/>
            <person name="Satge C."/>
            <person name="Perez M."/>
            <person name="Cauet S."/>
            <person name="Marande W."/>
            <person name="Chantry-Darmon C."/>
            <person name="Lopez-Roques C."/>
            <person name="Bouchez O."/>
            <person name="Berard A."/>
            <person name="Debelle F."/>
            <person name="Munos S."/>
            <person name="Bendahmane A."/>
            <person name="Berges H."/>
            <person name="Niebel A."/>
            <person name="Buitink J."/>
            <person name="Frugier F."/>
            <person name="Benhamed M."/>
            <person name="Crespi M."/>
            <person name="Gouzy J."/>
            <person name="Gamas P."/>
        </authorList>
    </citation>
    <scope>NUCLEOTIDE SEQUENCE [LARGE SCALE GENOMIC DNA]</scope>
    <source>
        <strain>cv. Jemalong A17</strain>
    </source>
</reference>
<reference key="4">
    <citation type="journal article" date="2005" name="Mol. Plant Microbe Interact.">
        <title>Combined transcriptome profiling reveals a novel family of arbuscular mycorrhizal-specific Medicago truncatula lectin genes.</title>
        <authorList>
            <person name="Frenzel A."/>
            <person name="Manthey K."/>
            <person name="Perlick A.M."/>
            <person name="Meyer F."/>
            <person name="Puehler A."/>
            <person name="Kuester H."/>
            <person name="Krajinski F."/>
        </authorList>
    </citation>
    <scope>NUCLEOTIDE SEQUENCE [MRNA] OF 2-295</scope>
    <scope>INDUCTION BY ARBUSCULAR MYCORRHIZAL FUNGI</scope>
    <source>
        <strain>cv. Jemalong A17</strain>
    </source>
</reference>
<feature type="chain" id="PRO_0000450046" description="Lectin 11">
    <location>
        <begin position="1"/>
        <end position="295"/>
    </location>
</feature>
<feature type="topological domain" description="Cytoplasmic" evidence="5">
    <location>
        <begin position="1"/>
        <end position="22"/>
    </location>
</feature>
<feature type="transmembrane region" description="Helical" evidence="1">
    <location>
        <begin position="23"/>
        <end position="45"/>
    </location>
</feature>
<feature type="topological domain" description="Extracellular" evidence="5">
    <location>
        <begin position="46"/>
        <end position="295"/>
    </location>
</feature>
<feature type="glycosylation site" description="N-linked (GlcNAc...) asparagine" evidence="2">
    <location>
        <position position="152"/>
    </location>
</feature>
<dbReference type="EMBL" id="CM001224">
    <property type="protein sequence ID" value="AET03338.1"/>
    <property type="molecule type" value="Genomic_DNA"/>
</dbReference>
<dbReference type="EMBL" id="PSQE01000008">
    <property type="protein sequence ID" value="RHN41527.1"/>
    <property type="molecule type" value="Genomic_DNA"/>
</dbReference>
<dbReference type="EMBL" id="DQ314213">
    <property type="protein sequence ID" value="ABC47816.1"/>
    <property type="molecule type" value="mRNA"/>
</dbReference>
<dbReference type="RefSeq" id="XP_003628862.1">
    <property type="nucleotide sequence ID" value="XM_003628814.2"/>
</dbReference>
<dbReference type="SMR" id="A0A396GS61"/>
<dbReference type="STRING" id="3880.Q2PP73"/>
<dbReference type="GlyCosmos" id="A0A396GS61">
    <property type="glycosylation" value="1 site, No reported glycans"/>
</dbReference>
<dbReference type="PaxDb" id="3880-AET03338"/>
<dbReference type="EnsemblPlants" id="rna47860">
    <property type="protein sequence ID" value="RHN41527.1"/>
    <property type="gene ID" value="gene47860"/>
</dbReference>
<dbReference type="GeneID" id="11440495"/>
<dbReference type="Gramene" id="rna47860">
    <property type="protein sequence ID" value="RHN41527.1"/>
    <property type="gene ID" value="gene47860"/>
</dbReference>
<dbReference type="KEGG" id="mtr:11440495"/>
<dbReference type="eggNOG" id="ENOG502QTX3">
    <property type="taxonomic scope" value="Eukaryota"/>
</dbReference>
<dbReference type="HOGENOM" id="CLU_000288_62_2_1"/>
<dbReference type="OrthoDB" id="2014828at2759"/>
<dbReference type="Proteomes" id="UP000002051">
    <property type="component" value="Chromosome 8"/>
</dbReference>
<dbReference type="Proteomes" id="UP000265566">
    <property type="component" value="Chromosome 8"/>
</dbReference>
<dbReference type="GO" id="GO:0016020">
    <property type="term" value="C:membrane"/>
    <property type="evidence" value="ECO:0007669"/>
    <property type="project" value="UniProtKB-SubCell"/>
</dbReference>
<dbReference type="GO" id="GO:0030246">
    <property type="term" value="F:carbohydrate binding"/>
    <property type="evidence" value="ECO:0007669"/>
    <property type="project" value="UniProtKB-KW"/>
</dbReference>
<dbReference type="GO" id="GO:0009610">
    <property type="term" value="P:response to symbiotic fungus"/>
    <property type="evidence" value="ECO:0000270"/>
    <property type="project" value="UniProtKB"/>
</dbReference>
<dbReference type="CDD" id="cd06899">
    <property type="entry name" value="lectin_legume_LecRK_Arcelin_ConA"/>
    <property type="match status" value="1"/>
</dbReference>
<dbReference type="Gene3D" id="2.60.120.200">
    <property type="match status" value="1"/>
</dbReference>
<dbReference type="InterPro" id="IPR013320">
    <property type="entry name" value="ConA-like_dom_sf"/>
</dbReference>
<dbReference type="InterPro" id="IPR016363">
    <property type="entry name" value="L-lectin"/>
</dbReference>
<dbReference type="InterPro" id="IPR001220">
    <property type="entry name" value="Legume_lectin_dom"/>
</dbReference>
<dbReference type="InterPro" id="IPR050258">
    <property type="entry name" value="Leguminous_Lectin"/>
</dbReference>
<dbReference type="PANTHER" id="PTHR32401">
    <property type="entry name" value="CONCANAVALIN A-LIKE LECTIN FAMILY PROTEIN"/>
    <property type="match status" value="1"/>
</dbReference>
<dbReference type="PANTHER" id="PTHR32401:SF14">
    <property type="entry name" value="LECTIN 5"/>
    <property type="match status" value="1"/>
</dbReference>
<dbReference type="Pfam" id="PF00139">
    <property type="entry name" value="Lectin_legB"/>
    <property type="match status" value="1"/>
</dbReference>
<dbReference type="PIRSF" id="PIRSF002690">
    <property type="entry name" value="L-type_lectin_plant"/>
    <property type="match status" value="1"/>
</dbReference>
<dbReference type="SUPFAM" id="SSF49899">
    <property type="entry name" value="Concanavalin A-like lectins/glucanases"/>
    <property type="match status" value="1"/>
</dbReference>
<protein>
    <recommendedName>
        <fullName evidence="4">Lectin 11</fullName>
        <shortName evidence="4">MtLec11</shortName>
    </recommendedName>
    <alternativeName>
        <fullName evidence="5">Agglutinin LEC11</fullName>
    </alternativeName>
</protein>
<proteinExistence type="evidence at transcript level"/>
<comment type="function">
    <text evidence="6">May be involved in arbuscular mycorrhizal (AM) symbiosis with AM fungi.</text>
</comment>
<comment type="subcellular location">
    <subcellularLocation>
        <location evidence="1">Membrane</location>
        <topology evidence="1">Single-pass membrane protein</topology>
    </subcellularLocation>
</comment>
<comment type="induction">
    <text evidence="3">Accumulates in roots during colonization by arbuscular mycorrhizal (AM) fungi (e.g. Glomus intraradices).</text>
</comment>
<comment type="similarity">
    <text evidence="5">Belongs to the leguminous lectin family.</text>
</comment>
<keyword id="KW-0325">Glycoprotein</keyword>
<keyword id="KW-0430">Lectin</keyword>
<keyword id="KW-0472">Membrane</keyword>
<keyword id="KW-1185">Reference proteome</keyword>
<keyword id="KW-0812">Transmembrane</keyword>
<keyword id="KW-1133">Transmembrane helix</keyword>